<accession>Q86II5</accession>
<accession>Q559E4</accession>
<dbReference type="EC" id="2.3.1.-"/>
<dbReference type="EMBL" id="AAFI02000008">
    <property type="protein sequence ID" value="EAL70992.1"/>
    <property type="molecule type" value="Genomic_DNA"/>
</dbReference>
<dbReference type="RefSeq" id="XP_644872.1">
    <property type="nucleotide sequence ID" value="XM_639780.1"/>
</dbReference>
<dbReference type="SMR" id="Q86II5"/>
<dbReference type="FunCoup" id="Q86II5">
    <property type="interactions" value="89"/>
</dbReference>
<dbReference type="STRING" id="44689.Q86II5"/>
<dbReference type="PaxDb" id="44689-DDB0302480"/>
<dbReference type="EnsemblProtists" id="EAL70992">
    <property type="protein sequence ID" value="EAL70992"/>
    <property type="gene ID" value="DDB_G0272710"/>
</dbReference>
<dbReference type="GeneID" id="8618551"/>
<dbReference type="KEGG" id="ddi:DDB_G0272710"/>
<dbReference type="dictyBase" id="DDB_G0272710">
    <property type="gene designation" value="nat9"/>
</dbReference>
<dbReference type="VEuPathDB" id="AmoebaDB:DDB_G0272710"/>
<dbReference type="eggNOG" id="KOG4135">
    <property type="taxonomic scope" value="Eukaryota"/>
</dbReference>
<dbReference type="HOGENOM" id="CLU_073102_0_0_1"/>
<dbReference type="InParanoid" id="Q86II5"/>
<dbReference type="OMA" id="WHVPRYH"/>
<dbReference type="PhylomeDB" id="Q86II5"/>
<dbReference type="PRO" id="PR:Q86II5"/>
<dbReference type="Proteomes" id="UP000002195">
    <property type="component" value="Chromosome 2"/>
</dbReference>
<dbReference type="GO" id="GO:0008080">
    <property type="term" value="F:N-acetyltransferase activity"/>
    <property type="evidence" value="ECO:0007669"/>
    <property type="project" value="InterPro"/>
</dbReference>
<dbReference type="FunFam" id="3.40.630.30:FF:000248">
    <property type="entry name" value="N-acetyltransferase 9-like protein"/>
    <property type="match status" value="1"/>
</dbReference>
<dbReference type="Gene3D" id="3.40.630.30">
    <property type="match status" value="1"/>
</dbReference>
<dbReference type="InterPro" id="IPR016181">
    <property type="entry name" value="Acyl_CoA_acyltransferase"/>
</dbReference>
<dbReference type="InterPro" id="IPR000182">
    <property type="entry name" value="GNAT_dom"/>
</dbReference>
<dbReference type="InterPro" id="IPR039135">
    <property type="entry name" value="NAT9-like"/>
</dbReference>
<dbReference type="PANTHER" id="PTHR13256:SF16">
    <property type="entry name" value="ALPHA_BETA-TUBULIN-N-ACETYLTRANSFERASE 9"/>
    <property type="match status" value="1"/>
</dbReference>
<dbReference type="PANTHER" id="PTHR13256">
    <property type="entry name" value="N-ACETYLTRANSFERASE 9"/>
    <property type="match status" value="1"/>
</dbReference>
<dbReference type="Pfam" id="PF13302">
    <property type="entry name" value="Acetyltransf_3"/>
    <property type="match status" value="1"/>
</dbReference>
<dbReference type="SUPFAM" id="SSF55729">
    <property type="entry name" value="Acyl-CoA N-acyltransferases (Nat)"/>
    <property type="match status" value="1"/>
</dbReference>
<protein>
    <recommendedName>
        <fullName>N-acetyltransferase 9-like protein</fullName>
        <ecNumber>2.3.1.-</ecNumber>
    </recommendedName>
</protein>
<gene>
    <name type="primary">nat9</name>
    <name type="ORF">DDB_G0272710</name>
</gene>
<feature type="chain" id="PRO_0000331391" description="N-acetyltransferase 9-like protein">
    <location>
        <begin position="1"/>
        <end position="212"/>
    </location>
</feature>
<feature type="domain" description="N-acetyltransferase">
    <location>
        <begin position="34"/>
        <end position="201"/>
    </location>
</feature>
<proteinExistence type="inferred from homology"/>
<evidence type="ECO:0000305" key="1"/>
<comment type="similarity">
    <text evidence="1">Belongs to the acetyltransferase family. GNAT subfamily.</text>
</comment>
<keyword id="KW-0012">Acyltransferase</keyword>
<keyword id="KW-1185">Reference proteome</keyword>
<keyword id="KW-0808">Transferase</keyword>
<organism>
    <name type="scientific">Dictyostelium discoideum</name>
    <name type="common">Social amoeba</name>
    <dbReference type="NCBI Taxonomy" id="44689"/>
    <lineage>
        <taxon>Eukaryota</taxon>
        <taxon>Amoebozoa</taxon>
        <taxon>Evosea</taxon>
        <taxon>Eumycetozoa</taxon>
        <taxon>Dictyostelia</taxon>
        <taxon>Dictyosteliales</taxon>
        <taxon>Dictyosteliaceae</taxon>
        <taxon>Dictyostelium</taxon>
    </lineage>
</organism>
<reference key="1">
    <citation type="journal article" date="2002" name="Nature">
        <title>Sequence and analysis of chromosome 2 of Dictyostelium discoideum.</title>
        <authorList>
            <person name="Gloeckner G."/>
            <person name="Eichinger L."/>
            <person name="Szafranski K."/>
            <person name="Pachebat J.A."/>
            <person name="Bankier A.T."/>
            <person name="Dear P.H."/>
            <person name="Lehmann R."/>
            <person name="Baumgart C."/>
            <person name="Parra G."/>
            <person name="Abril J.F."/>
            <person name="Guigo R."/>
            <person name="Kumpf K."/>
            <person name="Tunggal B."/>
            <person name="Cox E.C."/>
            <person name="Quail M.A."/>
            <person name="Platzer M."/>
            <person name="Rosenthal A."/>
            <person name="Noegel A.A."/>
        </authorList>
    </citation>
    <scope>NUCLEOTIDE SEQUENCE [LARGE SCALE GENOMIC DNA]</scope>
    <source>
        <strain>AX4</strain>
    </source>
</reference>
<reference key="2">
    <citation type="journal article" date="2005" name="Nature">
        <title>The genome of the social amoeba Dictyostelium discoideum.</title>
        <authorList>
            <person name="Eichinger L."/>
            <person name="Pachebat J.A."/>
            <person name="Gloeckner G."/>
            <person name="Rajandream M.A."/>
            <person name="Sucgang R."/>
            <person name="Berriman M."/>
            <person name="Song J."/>
            <person name="Olsen R."/>
            <person name="Szafranski K."/>
            <person name="Xu Q."/>
            <person name="Tunggal B."/>
            <person name="Kummerfeld S."/>
            <person name="Madera M."/>
            <person name="Konfortov B.A."/>
            <person name="Rivero F."/>
            <person name="Bankier A.T."/>
            <person name="Lehmann R."/>
            <person name="Hamlin N."/>
            <person name="Davies R."/>
            <person name="Gaudet P."/>
            <person name="Fey P."/>
            <person name="Pilcher K."/>
            <person name="Chen G."/>
            <person name="Saunders D."/>
            <person name="Sodergren E.J."/>
            <person name="Davis P."/>
            <person name="Kerhornou A."/>
            <person name="Nie X."/>
            <person name="Hall N."/>
            <person name="Anjard C."/>
            <person name="Hemphill L."/>
            <person name="Bason N."/>
            <person name="Farbrother P."/>
            <person name="Desany B."/>
            <person name="Just E."/>
            <person name="Morio T."/>
            <person name="Rost R."/>
            <person name="Churcher C.M."/>
            <person name="Cooper J."/>
            <person name="Haydock S."/>
            <person name="van Driessche N."/>
            <person name="Cronin A."/>
            <person name="Goodhead I."/>
            <person name="Muzny D.M."/>
            <person name="Mourier T."/>
            <person name="Pain A."/>
            <person name="Lu M."/>
            <person name="Harper D."/>
            <person name="Lindsay R."/>
            <person name="Hauser H."/>
            <person name="James K.D."/>
            <person name="Quiles M."/>
            <person name="Madan Babu M."/>
            <person name="Saito T."/>
            <person name="Buchrieser C."/>
            <person name="Wardroper A."/>
            <person name="Felder M."/>
            <person name="Thangavelu M."/>
            <person name="Johnson D."/>
            <person name="Knights A."/>
            <person name="Loulseged H."/>
            <person name="Mungall K.L."/>
            <person name="Oliver K."/>
            <person name="Price C."/>
            <person name="Quail M.A."/>
            <person name="Urushihara H."/>
            <person name="Hernandez J."/>
            <person name="Rabbinowitsch E."/>
            <person name="Steffen D."/>
            <person name="Sanders M."/>
            <person name="Ma J."/>
            <person name="Kohara Y."/>
            <person name="Sharp S."/>
            <person name="Simmonds M.N."/>
            <person name="Spiegler S."/>
            <person name="Tivey A."/>
            <person name="Sugano S."/>
            <person name="White B."/>
            <person name="Walker D."/>
            <person name="Woodward J.R."/>
            <person name="Winckler T."/>
            <person name="Tanaka Y."/>
            <person name="Shaulsky G."/>
            <person name="Schleicher M."/>
            <person name="Weinstock G.M."/>
            <person name="Rosenthal A."/>
            <person name="Cox E.C."/>
            <person name="Chisholm R.L."/>
            <person name="Gibbs R.A."/>
            <person name="Loomis W.F."/>
            <person name="Platzer M."/>
            <person name="Kay R.R."/>
            <person name="Williams J.G."/>
            <person name="Dear P.H."/>
            <person name="Noegel A.A."/>
            <person name="Barrell B.G."/>
            <person name="Kuspa A."/>
        </authorList>
    </citation>
    <scope>NUCLEOTIDE SEQUENCE [LARGE SCALE GENOMIC DNA]</scope>
    <source>
        <strain>AX4</strain>
    </source>
</reference>
<sequence length="212" mass="24859">MKINSNTIIIGKKVILVPYKKKHVEKYWKWMQSEEIREQTASEELTIEEEFENQESWFKDDHKITFIILDKDLLLENEKDSNGYSNENDIKSMIGDVNIFFNQYEDEGTAELEVMIAEPTSRRKGLAREAISIIMGYGIEHLSTITKKYIVKIGESNQPSIQMFKSMNFKQIGSVNVFKEILLEFENGENNINLLNLKNNDNYKSLIFKNWE</sequence>
<name>NAT9_DICDI</name>